<gene>
    <name type="primary">med27</name>
    <name type="synonym">med3</name>
    <name type="ORF">DDB_G0271072</name>
</gene>
<accession>Q55BX7</accession>
<keyword id="KW-0010">Activator</keyword>
<keyword id="KW-0175">Coiled coil</keyword>
<keyword id="KW-0539">Nucleus</keyword>
<keyword id="KW-1185">Reference proteome</keyword>
<keyword id="KW-0804">Transcription</keyword>
<keyword id="KW-0805">Transcription regulation</keyword>
<feature type="chain" id="PRO_0000388643" description="Putative mediator of RNA polymerase II transcription subunit 27">
    <location>
        <begin position="1"/>
        <end position="450"/>
    </location>
</feature>
<feature type="coiled-coil region" evidence="2">
    <location>
        <begin position="15"/>
        <end position="118"/>
    </location>
</feature>
<comment type="function">
    <text evidence="1">Component of the Mediator complex, a coactivator involved in the regulated transcription of nearly all RNA polymerase II-dependent genes. Mediator functions as a bridge to convey information from gene-specific regulatory proteins to the basal RNA polymerase II transcription machinery. Mediator is recruited to promoters by direct interactions with regulatory proteins and serves as a scaffold for the assembly of a functional preinitiation complex with RNA polymerase II and the general transcription factors (By similarity).</text>
</comment>
<comment type="subunit">
    <text evidence="1">Component of the Mediator complex.</text>
</comment>
<comment type="subcellular location">
    <subcellularLocation>
        <location evidence="1">Nucleus</location>
    </subcellularLocation>
</comment>
<comment type="similarity">
    <text evidence="3">Belongs to the Mediator complex subunit 27 family.</text>
</comment>
<name>MED27_DICDI</name>
<sequence>MQVQQPQQIQQQHLQQQQAQQHQQQQVQQHQQQQQQQQQQQQIYQQIVNQPVNNVHQLPSLQQQQLLEQYDELLKQVSLIRSNVSDFFNSFIEDAKQQQTIVNKEEMKQKLKKSMDLVLGSISSIDKVSKRISSYSFQIASSNFSTQEASWAYSTGIYDNRNIKVQLEIRNENYWRSQTSYKSSLASSNLENKLKDLFPIIFQEDEESSSLSKKRKQISSLTSNSLSTTTITTTTTPSPLFKLPSTPPTLLLSGTISPFYDYFAQIERVIHSIRQESALEIFEIQKQSSGAPKGLFVECPDVFKCLICFGIPNDRKDCFTIDRISFFGVKENFDSLWASSKYNIFKKISENSFEAISYYSANPNGGSILKCILSWIWSFRGLFLEECKGCQDILHLDSPQYMYLPPSFRTFDNYTPYHPSCYQNHLLSCNSFSSSTSSSIQQSPFSPLNK</sequence>
<organism>
    <name type="scientific">Dictyostelium discoideum</name>
    <name type="common">Social amoeba</name>
    <dbReference type="NCBI Taxonomy" id="44689"/>
    <lineage>
        <taxon>Eukaryota</taxon>
        <taxon>Amoebozoa</taxon>
        <taxon>Evosea</taxon>
        <taxon>Eumycetozoa</taxon>
        <taxon>Dictyostelia</taxon>
        <taxon>Dictyosteliales</taxon>
        <taxon>Dictyosteliaceae</taxon>
        <taxon>Dictyostelium</taxon>
    </lineage>
</organism>
<proteinExistence type="inferred from homology"/>
<reference key="1">
    <citation type="journal article" date="2005" name="Nature">
        <title>The genome of the social amoeba Dictyostelium discoideum.</title>
        <authorList>
            <person name="Eichinger L."/>
            <person name="Pachebat J.A."/>
            <person name="Gloeckner G."/>
            <person name="Rajandream M.A."/>
            <person name="Sucgang R."/>
            <person name="Berriman M."/>
            <person name="Song J."/>
            <person name="Olsen R."/>
            <person name="Szafranski K."/>
            <person name="Xu Q."/>
            <person name="Tunggal B."/>
            <person name="Kummerfeld S."/>
            <person name="Madera M."/>
            <person name="Konfortov B.A."/>
            <person name="Rivero F."/>
            <person name="Bankier A.T."/>
            <person name="Lehmann R."/>
            <person name="Hamlin N."/>
            <person name="Davies R."/>
            <person name="Gaudet P."/>
            <person name="Fey P."/>
            <person name="Pilcher K."/>
            <person name="Chen G."/>
            <person name="Saunders D."/>
            <person name="Sodergren E.J."/>
            <person name="Davis P."/>
            <person name="Kerhornou A."/>
            <person name="Nie X."/>
            <person name="Hall N."/>
            <person name="Anjard C."/>
            <person name="Hemphill L."/>
            <person name="Bason N."/>
            <person name="Farbrother P."/>
            <person name="Desany B."/>
            <person name="Just E."/>
            <person name="Morio T."/>
            <person name="Rost R."/>
            <person name="Churcher C.M."/>
            <person name="Cooper J."/>
            <person name="Haydock S."/>
            <person name="van Driessche N."/>
            <person name="Cronin A."/>
            <person name="Goodhead I."/>
            <person name="Muzny D.M."/>
            <person name="Mourier T."/>
            <person name="Pain A."/>
            <person name="Lu M."/>
            <person name="Harper D."/>
            <person name="Lindsay R."/>
            <person name="Hauser H."/>
            <person name="James K.D."/>
            <person name="Quiles M."/>
            <person name="Madan Babu M."/>
            <person name="Saito T."/>
            <person name="Buchrieser C."/>
            <person name="Wardroper A."/>
            <person name="Felder M."/>
            <person name="Thangavelu M."/>
            <person name="Johnson D."/>
            <person name="Knights A."/>
            <person name="Loulseged H."/>
            <person name="Mungall K.L."/>
            <person name="Oliver K."/>
            <person name="Price C."/>
            <person name="Quail M.A."/>
            <person name="Urushihara H."/>
            <person name="Hernandez J."/>
            <person name="Rabbinowitsch E."/>
            <person name="Steffen D."/>
            <person name="Sanders M."/>
            <person name="Ma J."/>
            <person name="Kohara Y."/>
            <person name="Sharp S."/>
            <person name="Simmonds M.N."/>
            <person name="Spiegler S."/>
            <person name="Tivey A."/>
            <person name="Sugano S."/>
            <person name="White B."/>
            <person name="Walker D."/>
            <person name="Woodward J.R."/>
            <person name="Winckler T."/>
            <person name="Tanaka Y."/>
            <person name="Shaulsky G."/>
            <person name="Schleicher M."/>
            <person name="Weinstock G.M."/>
            <person name="Rosenthal A."/>
            <person name="Cox E.C."/>
            <person name="Chisholm R.L."/>
            <person name="Gibbs R.A."/>
            <person name="Loomis W.F."/>
            <person name="Platzer M."/>
            <person name="Kay R.R."/>
            <person name="Williams J.G."/>
            <person name="Dear P.H."/>
            <person name="Noegel A.A."/>
            <person name="Barrell B.G."/>
            <person name="Kuspa A."/>
        </authorList>
    </citation>
    <scope>NUCLEOTIDE SEQUENCE [LARGE SCALE GENOMIC DNA]</scope>
    <source>
        <strain>AX4</strain>
    </source>
</reference>
<reference key="2">
    <citation type="journal article" date="2008" name="Nucleic Acids Res.">
        <title>Comparative genomics supports a deep evolutionary origin for the large, four-module transcriptional mediator complex.</title>
        <authorList>
            <person name="Bourbon H.-M."/>
        </authorList>
    </citation>
    <scope>NOMENCLATURE</scope>
</reference>
<evidence type="ECO:0000250" key="1"/>
<evidence type="ECO:0000255" key="2"/>
<evidence type="ECO:0000305" key="3"/>
<dbReference type="EMBL" id="AAFI02000005">
    <property type="protein sequence ID" value="EAL72886.1"/>
    <property type="molecule type" value="Genomic_DNA"/>
</dbReference>
<dbReference type="RefSeq" id="XP_646704.1">
    <property type="nucleotide sequence ID" value="XM_641612.1"/>
</dbReference>
<dbReference type="SMR" id="Q55BX7"/>
<dbReference type="STRING" id="44689.Q55BX7"/>
<dbReference type="PaxDb" id="44689-DDB0266847"/>
<dbReference type="EnsemblProtists" id="EAL72886">
    <property type="protein sequence ID" value="EAL72886"/>
    <property type="gene ID" value="DDB_G0271072"/>
</dbReference>
<dbReference type="GeneID" id="8617678"/>
<dbReference type="KEGG" id="ddi:DDB_G0271072"/>
<dbReference type="dictyBase" id="DDB_G0271072">
    <property type="gene designation" value="med27"/>
</dbReference>
<dbReference type="VEuPathDB" id="AmoebaDB:DDB_G0271072"/>
<dbReference type="eggNOG" id="ENOG502QS6H">
    <property type="taxonomic scope" value="Eukaryota"/>
</dbReference>
<dbReference type="HOGENOM" id="CLU_608944_0_0_1"/>
<dbReference type="InParanoid" id="Q55BX7"/>
<dbReference type="OMA" id="SWIWSFR"/>
<dbReference type="PRO" id="PR:Q55BX7"/>
<dbReference type="Proteomes" id="UP000002195">
    <property type="component" value="Chromosome 1"/>
</dbReference>
<dbReference type="GO" id="GO:0016592">
    <property type="term" value="C:mediator complex"/>
    <property type="evidence" value="ECO:0000318"/>
    <property type="project" value="GO_Central"/>
</dbReference>
<dbReference type="GO" id="GO:0003713">
    <property type="term" value="F:transcription coactivator activity"/>
    <property type="evidence" value="ECO:0000318"/>
    <property type="project" value="GO_Central"/>
</dbReference>
<dbReference type="GO" id="GO:0006357">
    <property type="term" value="P:regulation of transcription by RNA polymerase II"/>
    <property type="evidence" value="ECO:0000318"/>
    <property type="project" value="GO_Central"/>
</dbReference>
<dbReference type="GO" id="GO:0006367">
    <property type="term" value="P:transcription initiation at RNA polymerase II promoter"/>
    <property type="evidence" value="ECO:0000250"/>
    <property type="project" value="dictyBase"/>
</dbReference>
<dbReference type="InterPro" id="IPR021627">
    <property type="entry name" value="Mediator_Med27"/>
</dbReference>
<dbReference type="PANTHER" id="PTHR13130">
    <property type="entry name" value="34 KDA TRANSCRIPTIONAL CO-ACTIVATOR-RELATED"/>
    <property type="match status" value="1"/>
</dbReference>
<dbReference type="PANTHER" id="PTHR13130:SF4">
    <property type="entry name" value="MEDIATOR OF RNA POLYMERASE II TRANSCRIPTION SUBUNIT 27"/>
    <property type="match status" value="1"/>
</dbReference>
<dbReference type="Pfam" id="PF11571">
    <property type="entry name" value="Med27"/>
    <property type="match status" value="1"/>
</dbReference>
<protein>
    <recommendedName>
        <fullName>Putative mediator of RNA polymerase II transcription subunit 27</fullName>
    </recommendedName>
    <alternativeName>
        <fullName>Putative mediator complex subunit 27</fullName>
    </alternativeName>
    <alternativeName>
        <fullName>Putative mediator complex subunit 3</fullName>
    </alternativeName>
    <alternativeName>
        <fullName>Putative mediator of RNA polymerase II transcription subunit 3</fullName>
    </alternativeName>
</protein>